<accession>B2GDW7</accession>
<dbReference type="EMBL" id="AP008937">
    <property type="protein sequence ID" value="BAG27849.1"/>
    <property type="molecule type" value="Genomic_DNA"/>
</dbReference>
<dbReference type="RefSeq" id="WP_003681575.1">
    <property type="nucleotide sequence ID" value="NC_010610.1"/>
</dbReference>
<dbReference type="SMR" id="B2GDW7"/>
<dbReference type="GeneID" id="83716110"/>
<dbReference type="KEGG" id="lfe:LAF_1513"/>
<dbReference type="eggNOG" id="COG0089">
    <property type="taxonomic scope" value="Bacteria"/>
</dbReference>
<dbReference type="HOGENOM" id="CLU_037562_3_2_9"/>
<dbReference type="Proteomes" id="UP000001697">
    <property type="component" value="Chromosome"/>
</dbReference>
<dbReference type="GO" id="GO:1990904">
    <property type="term" value="C:ribonucleoprotein complex"/>
    <property type="evidence" value="ECO:0007669"/>
    <property type="project" value="UniProtKB-KW"/>
</dbReference>
<dbReference type="GO" id="GO:0005840">
    <property type="term" value="C:ribosome"/>
    <property type="evidence" value="ECO:0007669"/>
    <property type="project" value="UniProtKB-KW"/>
</dbReference>
<dbReference type="GO" id="GO:0019843">
    <property type="term" value="F:rRNA binding"/>
    <property type="evidence" value="ECO:0007669"/>
    <property type="project" value="UniProtKB-UniRule"/>
</dbReference>
<dbReference type="GO" id="GO:0003735">
    <property type="term" value="F:structural constituent of ribosome"/>
    <property type="evidence" value="ECO:0007669"/>
    <property type="project" value="InterPro"/>
</dbReference>
<dbReference type="GO" id="GO:0006412">
    <property type="term" value="P:translation"/>
    <property type="evidence" value="ECO:0007669"/>
    <property type="project" value="UniProtKB-UniRule"/>
</dbReference>
<dbReference type="FunFam" id="3.30.70.330:FF:000001">
    <property type="entry name" value="50S ribosomal protein L23"/>
    <property type="match status" value="1"/>
</dbReference>
<dbReference type="Gene3D" id="3.30.70.330">
    <property type="match status" value="1"/>
</dbReference>
<dbReference type="HAMAP" id="MF_01369_B">
    <property type="entry name" value="Ribosomal_uL23_B"/>
    <property type="match status" value="1"/>
</dbReference>
<dbReference type="InterPro" id="IPR012677">
    <property type="entry name" value="Nucleotide-bd_a/b_plait_sf"/>
</dbReference>
<dbReference type="InterPro" id="IPR013025">
    <property type="entry name" value="Ribosomal_uL23-like"/>
</dbReference>
<dbReference type="InterPro" id="IPR012678">
    <property type="entry name" value="Ribosomal_uL23/eL15/eS24_sf"/>
</dbReference>
<dbReference type="NCBIfam" id="NF004363">
    <property type="entry name" value="PRK05738.2-4"/>
    <property type="match status" value="1"/>
</dbReference>
<dbReference type="PANTHER" id="PTHR11620">
    <property type="entry name" value="60S RIBOSOMAL PROTEIN L23A"/>
    <property type="match status" value="1"/>
</dbReference>
<dbReference type="Pfam" id="PF00276">
    <property type="entry name" value="Ribosomal_L23"/>
    <property type="match status" value="1"/>
</dbReference>
<dbReference type="SUPFAM" id="SSF54189">
    <property type="entry name" value="Ribosomal proteins S24e, L23 and L15e"/>
    <property type="match status" value="1"/>
</dbReference>
<sequence length="97" mass="11148">MEARDIILRPVITEASTAAMDNKRYTFDVDLRATKTQVKNAVEEIFDVKVVKVNIMNVKGKQKRQGRYVGYTKRRRKAIVQLSADSNEIKLFGDDNE</sequence>
<protein>
    <recommendedName>
        <fullName evidence="1">Large ribosomal subunit protein uL23</fullName>
    </recommendedName>
    <alternativeName>
        <fullName evidence="2">50S ribosomal protein L23</fullName>
    </alternativeName>
</protein>
<organism>
    <name type="scientific">Limosilactobacillus fermentum (strain NBRC 3956 / LMG 18251)</name>
    <name type="common">Lactobacillus fermentum</name>
    <dbReference type="NCBI Taxonomy" id="334390"/>
    <lineage>
        <taxon>Bacteria</taxon>
        <taxon>Bacillati</taxon>
        <taxon>Bacillota</taxon>
        <taxon>Bacilli</taxon>
        <taxon>Lactobacillales</taxon>
        <taxon>Lactobacillaceae</taxon>
        <taxon>Limosilactobacillus</taxon>
    </lineage>
</organism>
<comment type="function">
    <text evidence="1">One of the early assembly proteins it binds 23S rRNA. One of the proteins that surrounds the polypeptide exit tunnel on the outside of the ribosome. Forms the main docking site for trigger factor binding to the ribosome.</text>
</comment>
<comment type="subunit">
    <text evidence="1">Part of the 50S ribosomal subunit. Contacts protein L29, and trigger factor when it is bound to the ribosome.</text>
</comment>
<comment type="similarity">
    <text evidence="1">Belongs to the universal ribosomal protein uL23 family.</text>
</comment>
<evidence type="ECO:0000255" key="1">
    <source>
        <dbReference type="HAMAP-Rule" id="MF_01369"/>
    </source>
</evidence>
<evidence type="ECO:0000305" key="2"/>
<gene>
    <name evidence="1" type="primary">rplW</name>
    <name type="ordered locus">LAF_1513</name>
</gene>
<feature type="chain" id="PRO_1000144580" description="Large ribosomal subunit protein uL23">
    <location>
        <begin position="1"/>
        <end position="97"/>
    </location>
</feature>
<proteinExistence type="inferred from homology"/>
<name>RL23_LIMF3</name>
<keyword id="KW-1185">Reference proteome</keyword>
<keyword id="KW-0687">Ribonucleoprotein</keyword>
<keyword id="KW-0689">Ribosomal protein</keyword>
<keyword id="KW-0694">RNA-binding</keyword>
<keyword id="KW-0699">rRNA-binding</keyword>
<reference key="1">
    <citation type="journal article" date="2008" name="DNA Res.">
        <title>Comparative genome analysis of Lactobacillus reuteri and Lactobacillus fermentum reveal a genomic island for reuterin and cobalamin production.</title>
        <authorList>
            <person name="Morita H."/>
            <person name="Toh H."/>
            <person name="Fukuda S."/>
            <person name="Horikawa H."/>
            <person name="Oshima K."/>
            <person name="Suzuki T."/>
            <person name="Murakami M."/>
            <person name="Hisamatsu S."/>
            <person name="Kato Y."/>
            <person name="Takizawa T."/>
            <person name="Fukuoka H."/>
            <person name="Yoshimura T."/>
            <person name="Itoh K."/>
            <person name="O'Sullivan D.J."/>
            <person name="McKay L.L."/>
            <person name="Ohno H."/>
            <person name="Kikuchi J."/>
            <person name="Masaoka T."/>
            <person name="Hattori M."/>
        </authorList>
    </citation>
    <scope>NUCLEOTIDE SEQUENCE [LARGE SCALE GENOMIC DNA]</scope>
    <source>
        <strain>NBRC 3956 / LMG 18251</strain>
    </source>
</reference>